<organism>
    <name type="scientific">Anser indicus</name>
    <name type="common">Bar-headed goose</name>
    <name type="synonym">Anas indica</name>
    <dbReference type="NCBI Taxonomy" id="8846"/>
    <lineage>
        <taxon>Eukaryota</taxon>
        <taxon>Metazoa</taxon>
        <taxon>Chordata</taxon>
        <taxon>Craniata</taxon>
        <taxon>Vertebrata</taxon>
        <taxon>Euteleostomi</taxon>
        <taxon>Archelosauria</taxon>
        <taxon>Archosauria</taxon>
        <taxon>Dinosauria</taxon>
        <taxon>Saurischia</taxon>
        <taxon>Theropoda</taxon>
        <taxon>Coelurosauria</taxon>
        <taxon>Aves</taxon>
        <taxon>Neognathae</taxon>
        <taxon>Galloanserae</taxon>
        <taxon>Anseriformes</taxon>
        <taxon>Anatidae</taxon>
        <taxon>Anserinae</taxon>
        <taxon>Anser</taxon>
    </lineage>
</organism>
<comment type="subcellular location">
    <subcellularLocation>
        <location>Secreted</location>
    </subcellularLocation>
</comment>
<comment type="domain">
    <text>Avian ovomucoid consists of three homologous, tandem Kazal family inhibitory domains.</text>
</comment>
<proteinExistence type="evidence at protein level"/>
<accession>P68437</accession>
<accession>P05573</accession>
<feature type="chain" id="PRO_0000073060" description="Ovomucoid">
    <location>
        <begin position="1" status="less than"/>
        <end position="54" status="greater than"/>
    </location>
</feature>
<feature type="domain" description="Kazal-like" evidence="1">
    <location>
        <begin position="4"/>
        <end position="54"/>
    </location>
</feature>
<feature type="site" description="Reactive bond 3">
    <location>
        <begin position="16"/>
        <end position="17"/>
    </location>
</feature>
<feature type="glycosylation site" description="N-linked (GlcNAc...) asparagine">
    <location>
        <position position="43"/>
    </location>
</feature>
<feature type="disulfide bond">
    <location>
        <begin position="6"/>
        <end position="36"/>
    </location>
</feature>
<feature type="disulfide bond">
    <location>
        <begin position="14"/>
        <end position="33"/>
    </location>
</feature>
<feature type="disulfide bond">
    <location>
        <begin position="22"/>
        <end position="54"/>
    </location>
</feature>
<feature type="non-terminal residue">
    <location>
        <position position="1"/>
    </location>
</feature>
<feature type="non-terminal residue">
    <location>
        <position position="54"/>
    </location>
</feature>
<reference key="1">
    <citation type="journal article" date="1987" name="Biochemistry">
        <title>Ovomucoid third domains from 100 avian species: isolation, sequences, and hypervariability of enzyme-inhibitor contact residues.</title>
        <authorList>
            <person name="Laskowski M. Jr."/>
            <person name="Kato I."/>
            <person name="Ardelt W."/>
            <person name="Cook J."/>
            <person name="Denton A."/>
            <person name="Empie M.W."/>
            <person name="Kohr W.J."/>
            <person name="Park S.J."/>
            <person name="Parks K."/>
            <person name="Schatzley B.L."/>
            <person name="Schoenberger O.L."/>
            <person name="Tashiro M."/>
            <person name="Vichot G."/>
            <person name="Whatley H.E."/>
            <person name="Wieczorek A."/>
            <person name="Wieczorek M."/>
        </authorList>
    </citation>
    <scope>PROTEIN SEQUENCE</scope>
</reference>
<protein>
    <recommendedName>
        <fullName>Ovomucoid</fullName>
    </recommendedName>
</protein>
<keyword id="KW-0903">Direct protein sequencing</keyword>
<keyword id="KW-1015">Disulfide bond</keyword>
<keyword id="KW-0325">Glycoprotein</keyword>
<keyword id="KW-0646">Protease inhibitor</keyword>
<keyword id="KW-0677">Repeat</keyword>
<keyword id="KW-0964">Secreted</keyword>
<keyword id="KW-0722">Serine protease inhibitor</keyword>
<name>IOVO_ANSIN</name>
<sequence length="54" mass="5842">VATVDCSDYPKPACTVEYMPLCGSDNKTYDNKCNFCNAVVDSNGTLTLSHFGKC</sequence>
<evidence type="ECO:0000255" key="1">
    <source>
        <dbReference type="PROSITE-ProRule" id="PRU00798"/>
    </source>
</evidence>
<dbReference type="PIR" id="E31436">
    <property type="entry name" value="E31436"/>
</dbReference>
<dbReference type="SMR" id="P68437"/>
<dbReference type="GO" id="GO:0005576">
    <property type="term" value="C:extracellular region"/>
    <property type="evidence" value="ECO:0007669"/>
    <property type="project" value="UniProtKB-SubCell"/>
</dbReference>
<dbReference type="GO" id="GO:0004867">
    <property type="term" value="F:serine-type endopeptidase inhibitor activity"/>
    <property type="evidence" value="ECO:0007669"/>
    <property type="project" value="UniProtKB-KW"/>
</dbReference>
<dbReference type="CDD" id="cd00104">
    <property type="entry name" value="KAZAL_FS"/>
    <property type="match status" value="1"/>
</dbReference>
<dbReference type="FunFam" id="3.30.60.30:FF:000037">
    <property type="entry name" value="Ovomucoid"/>
    <property type="match status" value="1"/>
</dbReference>
<dbReference type="Gene3D" id="3.30.60.30">
    <property type="match status" value="1"/>
</dbReference>
<dbReference type="InterPro" id="IPR051597">
    <property type="entry name" value="Bifunctional_prot_inhibitor"/>
</dbReference>
<dbReference type="InterPro" id="IPR002350">
    <property type="entry name" value="Kazal_dom"/>
</dbReference>
<dbReference type="InterPro" id="IPR036058">
    <property type="entry name" value="Kazal_dom_sf"/>
</dbReference>
<dbReference type="InterPro" id="IPR001239">
    <property type="entry name" value="Prot_inh_Kazal-m"/>
</dbReference>
<dbReference type="PANTHER" id="PTHR47729:SF1">
    <property type="entry name" value="OVOMUCOID-LIKE-RELATED"/>
    <property type="match status" value="1"/>
</dbReference>
<dbReference type="PANTHER" id="PTHR47729">
    <property type="entry name" value="SERINE PEPTIDASE INHIBITOR, KAZAL TYPE 2, TANDEM DUPLICATE 1-RELATED"/>
    <property type="match status" value="1"/>
</dbReference>
<dbReference type="Pfam" id="PF00050">
    <property type="entry name" value="Kazal_1"/>
    <property type="match status" value="1"/>
</dbReference>
<dbReference type="PRINTS" id="PR00290">
    <property type="entry name" value="KAZALINHBTR"/>
</dbReference>
<dbReference type="SMART" id="SM00280">
    <property type="entry name" value="KAZAL"/>
    <property type="match status" value="1"/>
</dbReference>
<dbReference type="SUPFAM" id="SSF100895">
    <property type="entry name" value="Kazal-type serine protease inhibitors"/>
    <property type="match status" value="1"/>
</dbReference>
<dbReference type="PROSITE" id="PS00282">
    <property type="entry name" value="KAZAL_1"/>
    <property type="match status" value="1"/>
</dbReference>
<dbReference type="PROSITE" id="PS51465">
    <property type="entry name" value="KAZAL_2"/>
    <property type="match status" value="1"/>
</dbReference>